<keyword id="KW-0326">Glycosidase</keyword>
<keyword id="KW-0378">Hydrolase</keyword>
<keyword id="KW-0462">Maltose metabolism</keyword>
<keyword id="KW-1185">Reference proteome</keyword>
<accession>P53341</accession>
<accession>D6VV67</accession>
<dbReference type="EC" id="3.2.1.20"/>
<dbReference type="EMBL" id="Z73077">
    <property type="protein sequence ID" value="CAA97325.1"/>
    <property type="molecule type" value="Genomic_DNA"/>
</dbReference>
<dbReference type="EMBL" id="BK006941">
    <property type="protein sequence ID" value="DAA08378.1"/>
    <property type="molecule type" value="Genomic_DNA"/>
</dbReference>
<dbReference type="PIR" id="S64627">
    <property type="entry name" value="S64627"/>
</dbReference>
<dbReference type="RefSeq" id="NP_011808.3">
    <property type="nucleotide sequence ID" value="NM_001181421.3"/>
</dbReference>
<dbReference type="SMR" id="P53341"/>
<dbReference type="BioGRID" id="33540">
    <property type="interactions" value="253"/>
</dbReference>
<dbReference type="DIP" id="DIP-4890N"/>
<dbReference type="FunCoup" id="P53341">
    <property type="interactions" value="1114"/>
</dbReference>
<dbReference type="IntAct" id="P53341">
    <property type="interactions" value="2"/>
</dbReference>
<dbReference type="STRING" id="4932.YGR292W"/>
<dbReference type="BindingDB" id="P53341"/>
<dbReference type="ChEMBL" id="CHEMBL2932"/>
<dbReference type="CAZy" id="GH13">
    <property type="family name" value="Glycoside Hydrolase Family 13"/>
</dbReference>
<dbReference type="PaxDb" id="4932-YGR292W"/>
<dbReference type="PeptideAtlas" id="P53341"/>
<dbReference type="TopDownProteomics" id="P53341"/>
<dbReference type="EnsemblFungi" id="YGR292W_mRNA">
    <property type="protein sequence ID" value="YGR292W"/>
    <property type="gene ID" value="YGR292W"/>
</dbReference>
<dbReference type="GeneID" id="853209"/>
<dbReference type="KEGG" id="sce:YGR292W"/>
<dbReference type="AGR" id="SGD:S000003524"/>
<dbReference type="SGD" id="S000003524">
    <property type="gene designation" value="MAL12"/>
</dbReference>
<dbReference type="VEuPathDB" id="FungiDB:YGR292W"/>
<dbReference type="eggNOG" id="KOG0471">
    <property type="taxonomic scope" value="Eukaryota"/>
</dbReference>
<dbReference type="GeneTree" id="ENSGT00940000176291"/>
<dbReference type="HOGENOM" id="CLU_006462_2_3_1"/>
<dbReference type="InParanoid" id="P53341"/>
<dbReference type="OMA" id="WNQPEVH"/>
<dbReference type="OrthoDB" id="1740265at2759"/>
<dbReference type="BioCyc" id="YEAST:YGR292W-MONOMER"/>
<dbReference type="BRENDA" id="2.4.1.B65">
    <property type="organism ID" value="984"/>
</dbReference>
<dbReference type="BRENDA" id="3.2.1.20">
    <property type="organism ID" value="984"/>
</dbReference>
<dbReference type="BioGRID-ORCS" id="853209">
    <property type="hits" value="0 hits in 10 CRISPR screens"/>
</dbReference>
<dbReference type="PRO" id="PR:P53341"/>
<dbReference type="Proteomes" id="UP000002311">
    <property type="component" value="Chromosome VII"/>
</dbReference>
<dbReference type="RNAct" id="P53341">
    <property type="molecule type" value="protein"/>
</dbReference>
<dbReference type="GO" id="GO:0005886">
    <property type="term" value="C:plasma membrane"/>
    <property type="evidence" value="ECO:0007005"/>
    <property type="project" value="SGD"/>
</dbReference>
<dbReference type="GO" id="GO:0004558">
    <property type="term" value="F:alpha-1,4-glucosidase activity"/>
    <property type="evidence" value="ECO:0000314"/>
    <property type="project" value="SGD"/>
</dbReference>
<dbReference type="GO" id="GO:0004556">
    <property type="term" value="F:alpha-amylase activity"/>
    <property type="evidence" value="ECO:0000318"/>
    <property type="project" value="GO_Central"/>
</dbReference>
<dbReference type="GO" id="GO:0033934">
    <property type="term" value="F:glucan 1,4-alpha-maltotriohydrolase activity"/>
    <property type="evidence" value="ECO:0000314"/>
    <property type="project" value="SGD"/>
</dbReference>
<dbReference type="GO" id="GO:0004574">
    <property type="term" value="F:oligo-1,6-glucosidase activity"/>
    <property type="evidence" value="ECO:0000318"/>
    <property type="project" value="GO_Central"/>
</dbReference>
<dbReference type="GO" id="GO:0004575">
    <property type="term" value="F:sucrose alpha-glucosidase activity"/>
    <property type="evidence" value="ECO:0000318"/>
    <property type="project" value="GO_Central"/>
</dbReference>
<dbReference type="GO" id="GO:0000025">
    <property type="term" value="P:maltose catabolic process"/>
    <property type="evidence" value="ECO:0000316"/>
    <property type="project" value="SGD"/>
</dbReference>
<dbReference type="GO" id="GO:0005987">
    <property type="term" value="P:sucrose catabolic process"/>
    <property type="evidence" value="ECO:0000316"/>
    <property type="project" value="SGD"/>
</dbReference>
<dbReference type="CDD" id="cd11333">
    <property type="entry name" value="AmyAc_SI_OligoGlu_DGase"/>
    <property type="match status" value="1"/>
</dbReference>
<dbReference type="FunFam" id="3.20.20.80:FF:000064">
    <property type="entry name" value="Oligo-1,6-glucosidase"/>
    <property type="match status" value="1"/>
</dbReference>
<dbReference type="FunFam" id="3.90.400.10:FF:000004">
    <property type="entry name" value="Oligo-1,6-glucosidase"/>
    <property type="match status" value="1"/>
</dbReference>
<dbReference type="FunFam" id="2.60.40.1180:FF:000027">
    <property type="entry name" value="Oligo-1,6-glucosidase IMA1"/>
    <property type="match status" value="1"/>
</dbReference>
<dbReference type="FunFam" id="3.20.20.80:FF:000087">
    <property type="entry name" value="Oligo-1,6-glucosidase IMA1"/>
    <property type="match status" value="1"/>
</dbReference>
<dbReference type="Gene3D" id="3.20.20.80">
    <property type="entry name" value="Glycosidases"/>
    <property type="match status" value="2"/>
</dbReference>
<dbReference type="Gene3D" id="2.60.40.1180">
    <property type="entry name" value="Golgi alpha-mannosidase II"/>
    <property type="match status" value="1"/>
</dbReference>
<dbReference type="Gene3D" id="3.90.400.10">
    <property type="entry name" value="Oligo-1,6-glucosidase, Domain 2"/>
    <property type="match status" value="1"/>
</dbReference>
<dbReference type="InterPro" id="IPR006047">
    <property type="entry name" value="Glyco_hydro_13_cat_dom"/>
</dbReference>
<dbReference type="InterPro" id="IPR013780">
    <property type="entry name" value="Glyco_hydro_b"/>
</dbReference>
<dbReference type="InterPro" id="IPR017853">
    <property type="entry name" value="Glycoside_hydrolase_SF"/>
</dbReference>
<dbReference type="InterPro" id="IPR045857">
    <property type="entry name" value="O16G_dom_2"/>
</dbReference>
<dbReference type="PANTHER" id="PTHR10357">
    <property type="entry name" value="ALPHA-AMYLASE FAMILY MEMBER"/>
    <property type="match status" value="1"/>
</dbReference>
<dbReference type="PANTHER" id="PTHR10357:SF179">
    <property type="entry name" value="NEUTRAL AND BASIC AMINO ACID TRANSPORT PROTEIN RBAT"/>
    <property type="match status" value="1"/>
</dbReference>
<dbReference type="Pfam" id="PF00128">
    <property type="entry name" value="Alpha-amylase"/>
    <property type="match status" value="1"/>
</dbReference>
<dbReference type="SMART" id="SM00642">
    <property type="entry name" value="Aamy"/>
    <property type="match status" value="1"/>
</dbReference>
<dbReference type="SUPFAM" id="SSF51445">
    <property type="entry name" value="(Trans)glycosidases"/>
    <property type="match status" value="1"/>
</dbReference>
<dbReference type="SUPFAM" id="SSF51011">
    <property type="entry name" value="Glycosyl hydrolase domain"/>
    <property type="match status" value="1"/>
</dbReference>
<proteinExistence type="evidence at protein level"/>
<reference key="1">
    <citation type="journal article" date="1997" name="Yeast">
        <title>Sequence analysis of a near-subtelomeric 35.4 kb DNA segment on the right arm of chromosome VII from Saccharomyces cerevisiae carrying the MAL1 locus reveals 15 complete open reading frames, including ZUO1, BGL2 and BIO2 genes and an ABC transporter gene.</title>
        <authorList>
            <person name="Volckaert G."/>
            <person name="Voet M."/>
            <person name="Robben J."/>
        </authorList>
    </citation>
    <scope>NUCLEOTIDE SEQUENCE [GENOMIC DNA]</scope>
    <source>
        <strain>ATCC 96604 / S288c / FY1679</strain>
    </source>
</reference>
<reference key="2">
    <citation type="journal article" date="1997" name="Nature">
        <title>The nucleotide sequence of Saccharomyces cerevisiae chromosome VII.</title>
        <authorList>
            <person name="Tettelin H."/>
            <person name="Agostoni-Carbone M.L."/>
            <person name="Albermann K."/>
            <person name="Albers M."/>
            <person name="Arroyo J."/>
            <person name="Backes U."/>
            <person name="Barreiros T."/>
            <person name="Bertani I."/>
            <person name="Bjourson A.J."/>
            <person name="Brueckner M."/>
            <person name="Bruschi C.V."/>
            <person name="Carignani G."/>
            <person name="Castagnoli L."/>
            <person name="Cerdan E."/>
            <person name="Clemente M.L."/>
            <person name="Coblenz A."/>
            <person name="Coglievina M."/>
            <person name="Coissac E."/>
            <person name="Defoor E."/>
            <person name="Del Bino S."/>
            <person name="Delius H."/>
            <person name="Delneri D."/>
            <person name="de Wergifosse P."/>
            <person name="Dujon B."/>
            <person name="Durand P."/>
            <person name="Entian K.-D."/>
            <person name="Eraso P."/>
            <person name="Escribano V."/>
            <person name="Fabiani L."/>
            <person name="Fartmann B."/>
            <person name="Feroli F."/>
            <person name="Feuermann M."/>
            <person name="Frontali L."/>
            <person name="Garcia-Gonzalez M."/>
            <person name="Garcia-Saez M.I."/>
            <person name="Goffeau A."/>
            <person name="Guerreiro P."/>
            <person name="Hani J."/>
            <person name="Hansen M."/>
            <person name="Hebling U."/>
            <person name="Hernandez K."/>
            <person name="Heumann K."/>
            <person name="Hilger F."/>
            <person name="Hofmann B."/>
            <person name="Indge K.J."/>
            <person name="James C.M."/>
            <person name="Klima R."/>
            <person name="Koetter P."/>
            <person name="Kramer B."/>
            <person name="Kramer W."/>
            <person name="Lauquin G."/>
            <person name="Leuther H."/>
            <person name="Louis E.J."/>
            <person name="Maillier E."/>
            <person name="Marconi A."/>
            <person name="Martegani E."/>
            <person name="Mazon M.J."/>
            <person name="Mazzoni C."/>
            <person name="McReynolds A.D.K."/>
            <person name="Melchioretto P."/>
            <person name="Mewes H.-W."/>
            <person name="Minenkova O."/>
            <person name="Mueller-Auer S."/>
            <person name="Nawrocki A."/>
            <person name="Netter P."/>
            <person name="Neu R."/>
            <person name="Nombela C."/>
            <person name="Oliver S.G."/>
            <person name="Panzeri L."/>
            <person name="Paoluzi S."/>
            <person name="Plevani P."/>
            <person name="Portetelle D."/>
            <person name="Portillo F."/>
            <person name="Potier S."/>
            <person name="Purnelle B."/>
            <person name="Rieger M."/>
            <person name="Riles L."/>
            <person name="Rinaldi T."/>
            <person name="Robben J."/>
            <person name="Rodrigues-Pousada C."/>
            <person name="Rodriguez-Belmonte E."/>
            <person name="Rodriguez-Torres A.M."/>
            <person name="Rose M."/>
            <person name="Ruzzi M."/>
            <person name="Saliola M."/>
            <person name="Sanchez-Perez M."/>
            <person name="Schaefer B."/>
            <person name="Schaefer M."/>
            <person name="Scharfe M."/>
            <person name="Schmidheini T."/>
            <person name="Schreer A."/>
            <person name="Skala J."/>
            <person name="Souciet J.-L."/>
            <person name="Steensma H.Y."/>
            <person name="Talla E."/>
            <person name="Thierry A."/>
            <person name="Vandenbol M."/>
            <person name="van der Aart Q.J.M."/>
            <person name="Van Dyck L."/>
            <person name="Vanoni M."/>
            <person name="Verhasselt P."/>
            <person name="Voet M."/>
            <person name="Volckaert G."/>
            <person name="Wambutt R."/>
            <person name="Watson M.D."/>
            <person name="Weber N."/>
            <person name="Wedler E."/>
            <person name="Wedler H."/>
            <person name="Wipfli P."/>
            <person name="Wolf K."/>
            <person name="Wright L.F."/>
            <person name="Zaccaria P."/>
            <person name="Zimmermann M."/>
            <person name="Zollner A."/>
            <person name="Kleine K."/>
        </authorList>
    </citation>
    <scope>NUCLEOTIDE SEQUENCE [LARGE SCALE GENOMIC DNA]</scope>
    <source>
        <strain>ATCC 204508 / S288c</strain>
    </source>
</reference>
<reference key="3">
    <citation type="journal article" date="2014" name="G3 (Bethesda)">
        <title>The reference genome sequence of Saccharomyces cerevisiae: Then and now.</title>
        <authorList>
            <person name="Engel S.R."/>
            <person name="Dietrich F.S."/>
            <person name="Fisk D.G."/>
            <person name="Binkley G."/>
            <person name="Balakrishnan R."/>
            <person name="Costanzo M.C."/>
            <person name="Dwight S.S."/>
            <person name="Hitz B.C."/>
            <person name="Karra K."/>
            <person name="Nash R.S."/>
            <person name="Weng S."/>
            <person name="Wong E.D."/>
            <person name="Lloyd P."/>
            <person name="Skrzypek M.S."/>
            <person name="Miyasato S.R."/>
            <person name="Simison M."/>
            <person name="Cherry J.M."/>
        </authorList>
    </citation>
    <scope>GENOME REANNOTATION</scope>
    <source>
        <strain>ATCC 204508 / S288c</strain>
    </source>
</reference>
<reference key="4">
    <citation type="journal article" date="2003" name="Nature">
        <title>Global analysis of protein expression in yeast.</title>
        <authorList>
            <person name="Ghaemmaghami S."/>
            <person name="Huh W.-K."/>
            <person name="Bower K."/>
            <person name="Howson R.W."/>
            <person name="Belle A."/>
            <person name="Dephoure N."/>
            <person name="O'Shea E.K."/>
            <person name="Weissman J.S."/>
        </authorList>
    </citation>
    <scope>LEVEL OF PROTEIN EXPRESSION [LARGE SCALE ANALYSIS]</scope>
</reference>
<sequence>MTISDHPETEPKWWKEATIYQIYPASFKDSNNDGWGDLKGITSKLQYIKDLGVDAIWVCPFYDSPQQDMGYDISNYEKVWPTYGTNEDCFELIDKTHKLGMKFITDLVINHCSTEHEWFKESRSSKTNPKRDWFFWRPPKGYDAEGKPIPPNNWKSFFGGSAWTFDETTNEFYLRLFASRQVDLNWENEDCRRAIFESAVGFWLDHGVDGFRIDTAGLYSKRPGLPDSPIFDKTSKLQHPNWGSHNGPRIHEYHQELHRFMKNRVKDGREIMTVGEVAHGSDNALYTSAARYEVSEVFSFTHVEVGTSPFFRYNIVPFTLKQWKEAIASNFLFINGTDSWATTYIENHDQARSITRFADDSPKYRKISGKLLTLLECSLTGTLYVYQGQEIGQINFKEWPIEKYEDVDVKNNYEIIKKSFGKNSKEMKDFFKGIALLSRDHSRTPMPWTKDKPNAGFTGPDVKPWFLLNESFEQGINVEQESRDDDSVLNFWKRALQARKKYKELMIYGYDFQFIDLDSDQIFSFTKEYEDKTLFAALNFSGEEIEFSLPREGASLSFILGNYDDTDVSSRVLKPWEGRIYLVK</sequence>
<evidence type="ECO:0000250" key="1"/>
<evidence type="ECO:0000269" key="2">
    <source>
    </source>
</evidence>
<evidence type="ECO:0000305" key="3"/>
<comment type="catalytic activity">
    <reaction>
        <text>Hydrolysis of terminal, non-reducing (1-&gt;4)-linked alpha-D-glucose residues with release of alpha-D-glucose.</text>
        <dbReference type="EC" id="3.2.1.20"/>
    </reaction>
</comment>
<comment type="miscellaneous">
    <text evidence="2">Present with 5060 molecules/cell in log phase SD medium.</text>
</comment>
<comment type="similarity">
    <text evidence="3">Belongs to the glycosyl hydrolase 13 family.</text>
</comment>
<protein>
    <recommendedName>
        <fullName>Alpha-glucosidase MAL12</fullName>
        <ecNumber>3.2.1.20</ecNumber>
    </recommendedName>
    <alternativeName>
        <fullName>Maltase</fullName>
    </alternativeName>
</protein>
<feature type="chain" id="PRO_0000054328" description="Alpha-glucosidase MAL12">
    <location>
        <begin position="1"/>
        <end position="584"/>
    </location>
</feature>
<feature type="active site" description="Nucleophile" evidence="1">
    <location>
        <position position="214"/>
    </location>
</feature>
<feature type="active site" description="Proton donor" evidence="1">
    <location>
        <position position="276"/>
    </location>
</feature>
<feature type="site" description="Transition state stabilizer" evidence="1">
    <location>
        <position position="349"/>
    </location>
</feature>
<organism>
    <name type="scientific">Saccharomyces cerevisiae (strain ATCC 204508 / S288c)</name>
    <name type="common">Baker's yeast</name>
    <dbReference type="NCBI Taxonomy" id="559292"/>
    <lineage>
        <taxon>Eukaryota</taxon>
        <taxon>Fungi</taxon>
        <taxon>Dikarya</taxon>
        <taxon>Ascomycota</taxon>
        <taxon>Saccharomycotina</taxon>
        <taxon>Saccharomycetes</taxon>
        <taxon>Saccharomycetales</taxon>
        <taxon>Saccharomycetaceae</taxon>
        <taxon>Saccharomyces</taxon>
    </lineage>
</organism>
<name>MAL12_YEAST</name>
<gene>
    <name type="primary">MAL12</name>
    <name type="synonym">MAL1S</name>
    <name type="ordered locus">YGR292W</name>
</gene>